<comment type="function">
    <text evidence="2">Catalyzes the activation of alpha-aminoadipate by ATP-dependent adenylation and the reduction of activated alpha-aminoadipate by NADPH. The activated alpha-aminoadipate is bound to the phosphopantheinyl group of the enzyme itself before it is reduced to (S)-2-amino-6-oxohexanoate.</text>
</comment>
<comment type="catalytic activity">
    <reaction evidence="2">
        <text>(S)-2-amino-6-oxohexanoate + NADP(+) + H2O = L-2-aminoadipate + NADPH + 2 H(+)</text>
        <dbReference type="Rhea" id="RHEA:12304"/>
        <dbReference type="ChEBI" id="CHEBI:15377"/>
        <dbReference type="ChEBI" id="CHEBI:15378"/>
        <dbReference type="ChEBI" id="CHEBI:57783"/>
        <dbReference type="ChEBI" id="CHEBI:58321"/>
        <dbReference type="ChEBI" id="CHEBI:58349"/>
        <dbReference type="ChEBI" id="CHEBI:58672"/>
        <dbReference type="EC" id="1.2.1.31"/>
    </reaction>
</comment>
<comment type="catalytic activity">
    <reaction evidence="2">
        <text>(S)-2-amino-6-oxohexanoate + NAD(+) + H2O = L-2-aminoadipate + NADH + 2 H(+)</text>
        <dbReference type="Rhea" id="RHEA:12308"/>
        <dbReference type="ChEBI" id="CHEBI:15377"/>
        <dbReference type="ChEBI" id="CHEBI:15378"/>
        <dbReference type="ChEBI" id="CHEBI:57540"/>
        <dbReference type="ChEBI" id="CHEBI:57945"/>
        <dbReference type="ChEBI" id="CHEBI:58321"/>
        <dbReference type="ChEBI" id="CHEBI:58672"/>
        <dbReference type="EC" id="1.2.1.31"/>
    </reaction>
</comment>
<comment type="catalytic activity">
    <reaction evidence="2">
        <text>(S)-2-amino-6-oxohexanoate + AMP + diphosphate + NADP(+) = L-2-aminoadipate + ATP + NADPH + H(+)</text>
        <dbReference type="Rhea" id="RHEA:46936"/>
        <dbReference type="ChEBI" id="CHEBI:15378"/>
        <dbReference type="ChEBI" id="CHEBI:30616"/>
        <dbReference type="ChEBI" id="CHEBI:33019"/>
        <dbReference type="ChEBI" id="CHEBI:57783"/>
        <dbReference type="ChEBI" id="CHEBI:58321"/>
        <dbReference type="ChEBI" id="CHEBI:58349"/>
        <dbReference type="ChEBI" id="CHEBI:58672"/>
        <dbReference type="ChEBI" id="CHEBI:456215"/>
        <dbReference type="EC" id="1.2.1.95"/>
    </reaction>
</comment>
<comment type="cofactor">
    <cofactor evidence="2">
        <name>pantetheine 4'-phosphate</name>
        <dbReference type="ChEBI" id="CHEBI:47942"/>
    </cofactor>
    <text evidence="2">Binds 1 phosphopantetheine covalently.</text>
</comment>
<comment type="pathway">
    <text>Amino-acid biosynthesis; L-lysine biosynthesis via AAA pathway; L-lysine from L-alpha-aminoadipate (fungal route): step 1/3.</text>
</comment>
<comment type="subunit">
    <text evidence="1">Heterodimer of an alpha and a beta subunit.</text>
</comment>
<comment type="similarity">
    <text evidence="4">Belongs to the ATP-dependent AMP-binding enzyme family.</text>
</comment>
<reference key="1">
    <citation type="journal article" date="1998" name="Mol. Gen. Genet.">
        <title>Characterization of the lys2 gene of Penicillium chrysogenum encoding alpha-aminoadipic acid reductase.</title>
        <authorList>
            <person name="Casqueiro J."/>
            <person name="Gutierrez S."/>
            <person name="Banuelos O."/>
            <person name="Fierro F."/>
            <person name="Velasco J."/>
            <person name="Martin J.F."/>
        </authorList>
    </citation>
    <scope>NUCLEOTIDE SEQUENCE [GENOMIC DNA]</scope>
    <source>
        <strain>AS-P-78</strain>
    </source>
</reference>
<keyword id="KW-0028">Amino-acid biosynthesis</keyword>
<keyword id="KW-0457">Lysine biosynthesis</keyword>
<keyword id="KW-0521">NADP</keyword>
<keyword id="KW-0560">Oxidoreductase</keyword>
<keyword id="KW-0596">Phosphopantetheine</keyword>
<keyword id="KW-0597">Phosphoprotein</keyword>
<feature type="chain" id="PRO_0000193151" description="L-2-aminoadipate reductase large subunit">
    <location>
        <begin position="1"/>
        <end position="1409"/>
    </location>
</feature>
<feature type="domain" description="Carrier" evidence="3">
    <location>
        <begin position="858"/>
        <end position="937"/>
    </location>
</feature>
<feature type="modified residue" description="O-(pantetheine 4'-phosphoryl)serine" evidence="3">
    <location>
        <position position="896"/>
    </location>
</feature>
<protein>
    <recommendedName>
        <fullName>L-2-aminoadipate reductase large subunit</fullName>
        <ecNumber evidence="2">1.2.1.31</ecNumber>
        <ecNumber evidence="2">1.2.1.95</ecNumber>
    </recommendedName>
    <alternativeName>
        <fullName>Alpha-aminoadipate reductase</fullName>
        <shortName>Alpha-AR</shortName>
    </alternativeName>
    <alternativeName>
        <fullName>L-aminoadipate-semialdehyde dehydrogenase</fullName>
    </alternativeName>
</protein>
<proteinExistence type="inferred from homology"/>
<accession>O74298</accession>
<gene>
    <name type="primary">lys2</name>
</gene>
<organism>
    <name type="scientific">Penicillium chrysogenum</name>
    <name type="common">Penicillium notatum</name>
    <dbReference type="NCBI Taxonomy" id="5076"/>
    <lineage>
        <taxon>Eukaryota</taxon>
        <taxon>Fungi</taxon>
        <taxon>Dikarya</taxon>
        <taxon>Ascomycota</taxon>
        <taxon>Pezizomycotina</taxon>
        <taxon>Eurotiomycetes</taxon>
        <taxon>Eurotiomycetidae</taxon>
        <taxon>Eurotiales</taxon>
        <taxon>Aspergillaceae</taxon>
        <taxon>Penicillium</taxon>
        <taxon>Penicillium chrysogenum species complex</taxon>
    </lineage>
</organism>
<evidence type="ECO:0000250" key="1"/>
<evidence type="ECO:0000250" key="2">
    <source>
        <dbReference type="UniProtKB" id="P07702"/>
    </source>
</evidence>
<evidence type="ECO:0000255" key="3">
    <source>
        <dbReference type="PROSITE-ProRule" id="PRU00258"/>
    </source>
</evidence>
<evidence type="ECO:0000305" key="4"/>
<name>LYS2_PENCH</name>
<dbReference type="EC" id="1.2.1.31" evidence="2"/>
<dbReference type="EC" id="1.2.1.95" evidence="2"/>
<dbReference type="EMBL" id="Y13967">
    <property type="protein sequence ID" value="CAA74300.1"/>
    <property type="molecule type" value="Genomic_DNA"/>
</dbReference>
<dbReference type="SMR" id="O74298"/>
<dbReference type="UniPathway" id="UPA00033">
    <property type="reaction ID" value="UER00032"/>
</dbReference>
<dbReference type="GO" id="GO:0004043">
    <property type="term" value="F:L-aminoadipate-semialdehyde dehydrogenase activity"/>
    <property type="evidence" value="ECO:0007669"/>
    <property type="project" value="UniProtKB-EC"/>
</dbReference>
<dbReference type="GO" id="GO:0031177">
    <property type="term" value="F:phosphopantetheine binding"/>
    <property type="evidence" value="ECO:0007669"/>
    <property type="project" value="InterPro"/>
</dbReference>
<dbReference type="GO" id="GO:0019878">
    <property type="term" value="P:lysine biosynthetic process via aminoadipic acid"/>
    <property type="evidence" value="ECO:0007669"/>
    <property type="project" value="UniProtKB-UniPathway"/>
</dbReference>
<dbReference type="GO" id="GO:0044550">
    <property type="term" value="P:secondary metabolite biosynthetic process"/>
    <property type="evidence" value="ECO:0007669"/>
    <property type="project" value="UniProtKB-ARBA"/>
</dbReference>
<dbReference type="CDD" id="cd17647">
    <property type="entry name" value="A_NRPS_alphaAR"/>
    <property type="match status" value="1"/>
</dbReference>
<dbReference type="CDD" id="cd05235">
    <property type="entry name" value="SDR_e1"/>
    <property type="match status" value="1"/>
</dbReference>
<dbReference type="FunFam" id="3.40.50.720:FF:000787">
    <property type="entry name" value="L-2-aminoadipate reductase"/>
    <property type="match status" value="1"/>
</dbReference>
<dbReference type="Gene3D" id="3.30.300.30">
    <property type="match status" value="1"/>
</dbReference>
<dbReference type="Gene3D" id="1.10.1200.10">
    <property type="entry name" value="ACP-like"/>
    <property type="match status" value="1"/>
</dbReference>
<dbReference type="Gene3D" id="3.40.50.12780">
    <property type="entry name" value="N-terminal domain of ligase-like"/>
    <property type="match status" value="1"/>
</dbReference>
<dbReference type="Gene3D" id="3.40.50.720">
    <property type="entry name" value="NAD(P)-binding Rossmann-like Domain"/>
    <property type="match status" value="1"/>
</dbReference>
<dbReference type="Gene3D" id="3.30.559.30">
    <property type="entry name" value="Nonribosomal peptide synthetase, condensation domain"/>
    <property type="match status" value="1"/>
</dbReference>
<dbReference type="InterPro" id="IPR010071">
    <property type="entry name" value="AA_adenyl_dom"/>
</dbReference>
<dbReference type="InterPro" id="IPR036736">
    <property type="entry name" value="ACP-like_sf"/>
</dbReference>
<dbReference type="InterPro" id="IPR045851">
    <property type="entry name" value="AMP-bd_C_sf"/>
</dbReference>
<dbReference type="InterPro" id="IPR020845">
    <property type="entry name" value="AMP-binding_CS"/>
</dbReference>
<dbReference type="InterPro" id="IPR000873">
    <property type="entry name" value="AMP-dep_synth/lig_dom"/>
</dbReference>
<dbReference type="InterPro" id="IPR042099">
    <property type="entry name" value="ANL_N_sf"/>
</dbReference>
<dbReference type="InterPro" id="IPR001242">
    <property type="entry name" value="Condensatn"/>
</dbReference>
<dbReference type="InterPro" id="IPR013120">
    <property type="entry name" value="Far_NAD-bd"/>
</dbReference>
<dbReference type="InterPro" id="IPR014397">
    <property type="entry name" value="Lys2"/>
</dbReference>
<dbReference type="InterPro" id="IPR036291">
    <property type="entry name" value="NAD(P)-bd_dom_sf"/>
</dbReference>
<dbReference type="InterPro" id="IPR020806">
    <property type="entry name" value="PKS_PP-bd"/>
</dbReference>
<dbReference type="InterPro" id="IPR009081">
    <property type="entry name" value="PP-bd_ACP"/>
</dbReference>
<dbReference type="InterPro" id="IPR010080">
    <property type="entry name" value="Thioester_reductase-like_dom"/>
</dbReference>
<dbReference type="NCBIfam" id="TIGR01733">
    <property type="entry name" value="AA-adenyl-dom"/>
    <property type="match status" value="1"/>
</dbReference>
<dbReference type="NCBIfam" id="TIGR03443">
    <property type="entry name" value="alpha_am_amid"/>
    <property type="match status" value="1"/>
</dbReference>
<dbReference type="NCBIfam" id="TIGR01746">
    <property type="entry name" value="Thioester-redct"/>
    <property type="match status" value="1"/>
</dbReference>
<dbReference type="PANTHER" id="PTHR44845">
    <property type="entry name" value="CARRIER DOMAIN-CONTAINING PROTEIN"/>
    <property type="match status" value="1"/>
</dbReference>
<dbReference type="PANTHER" id="PTHR44845:SF1">
    <property type="entry name" value="L-2-AMINOADIPATE REDUCTASE"/>
    <property type="match status" value="1"/>
</dbReference>
<dbReference type="Pfam" id="PF00501">
    <property type="entry name" value="AMP-binding"/>
    <property type="match status" value="1"/>
</dbReference>
<dbReference type="Pfam" id="PF00668">
    <property type="entry name" value="Condensation"/>
    <property type="match status" value="1"/>
</dbReference>
<dbReference type="Pfam" id="PF07993">
    <property type="entry name" value="NAD_binding_4"/>
    <property type="match status" value="1"/>
</dbReference>
<dbReference type="Pfam" id="PF00550">
    <property type="entry name" value="PP-binding"/>
    <property type="match status" value="1"/>
</dbReference>
<dbReference type="PIRSF" id="PIRSF001617">
    <property type="entry name" value="Alpha-AR"/>
    <property type="match status" value="1"/>
</dbReference>
<dbReference type="SMART" id="SM00823">
    <property type="entry name" value="PKS_PP"/>
    <property type="match status" value="1"/>
</dbReference>
<dbReference type="SUPFAM" id="SSF56801">
    <property type="entry name" value="Acetyl-CoA synthetase-like"/>
    <property type="match status" value="1"/>
</dbReference>
<dbReference type="SUPFAM" id="SSF47336">
    <property type="entry name" value="ACP-like"/>
    <property type="match status" value="1"/>
</dbReference>
<dbReference type="SUPFAM" id="SSF52777">
    <property type="entry name" value="CoA-dependent acyltransferases"/>
    <property type="match status" value="1"/>
</dbReference>
<dbReference type="SUPFAM" id="SSF51735">
    <property type="entry name" value="NAD(P)-binding Rossmann-fold domains"/>
    <property type="match status" value="1"/>
</dbReference>
<dbReference type="PROSITE" id="PS00455">
    <property type="entry name" value="AMP_BINDING"/>
    <property type="match status" value="1"/>
</dbReference>
<dbReference type="PROSITE" id="PS50075">
    <property type="entry name" value="CARRIER"/>
    <property type="match status" value="1"/>
</dbReference>
<sequence length="1409" mass="154842">MAVGTASLQDRLETWAQRLKNLTVSPLTRDYPDTQKTDSKRVIEAFESLQLPKAKLTGSSSSFIAFLTAFIILVARLTGDEDIAVGTNSNEDGRAFVIRVPIDTSESFAQLYAKVDKAYKEGSSQIVPLGSLRSYIQEKSKSERTPVLFRFAAYDAPASSQDYPANTFDTTDLVVNVAPGSAEVELGAYYNQRLFSSARIAFILKQLASIASNAAANPDEAIGRIDLMTEDQRALLPDPTCNLNWSNFRGAIHDIFTANAERHPEKLCVVETQSSSSPHREFTYRQINEASNILGHHLVRSGIQRGEVVMVYAYRGVDLVVAVMGILKAGATFSVIDPAYPPERQNIYLDVARPRALVNIAKATKDAGELSDIVRTFIDENLELRTEIPALALLDDGTLAGGSINGQDVFANDVALKSKPTGVVVGPDSIPTLSFTSGSEGRPKGVRGRHFSLAYYFPWMSETFKLTPDEKFTMLSGIAHDPIQRDIFTPLFLGAQLLVPAREDIQNEKLAEWIEKYGATITHLTPAMGQILVGGASAQFPALHHAFFVGDILIKRDCRSLQGLAPNVSIVNMYGTTETQRAVSYYEIPSYASNEGYLNNMKDVIMAGRGMLDVQMLVVNRYDPTRLCAIGEVGEIYVRAGGLAEGYLGSPELSAKKFLNNWFVNPEIWAEKDQAESRNEPWRQFYVGPRDRLYRSGDLGRYTPSGDVECSGRADDQVKIRGFRIELGEIDTHLSQHPLVRENVTLVRRDKDEEPTLVSYFVPDMNKWASWLESKGLKDDDSDSEGMVGLLRRFRPLRDDAREHLRTKLPTYAVPTVIIPLKRMPLNPNGKIDKPALPFPDTAELSAAAPRRASSALQALSETEQTLAQVWAKLIPNVTSRMIGPDDSFFDLGGHSILAQQMFFELRRKWRVIDISMNAIFRSPTLKGFASEIDRLLAMESFATSDDKTLAVQAANEPDDEYSKDAVQLVNELPKTFPQRTEAMLTSEPTVFLTGATGFLGAHILRDLLTRKSPSTKVVALVRAKTEELALERLRSTCRAYGFWDEAWTAKLQAVCGDLGKPQFGLSQSVWDDLTNRVDAVIHNGALVHWVYPYATLRPANVMGTIDALKLCASGKAKQFAFVSSTSALDKDRYVQESERIIAAGGNGISEDDDMEGSRVGLGTGYGQSKWAGEYLVKEAGRRGLRGTIVRSGYVLGDSVTGTTNTDDFLIRMLKGCIQIGLRPNIFNTVNMVPVDHVARIVIATAFHPPATGVNVAHVTGHPRLRFNQFLGALELYGYNVPQVDYVPWSTSLEQYVNDGEHNDKESQHALMPLYHFVTSDLPSNTKAPELDDVNAATALRADATWSGVDASAGAGVTEELVGLYASYLVQTGFLPAPTVAGARPLPAAQISEEQKKTLLSVGGRGGTS</sequence>